<comment type="subcellular location">
    <subcellularLocation>
        <location evidence="1">Mitochondrion</location>
    </subcellularLocation>
</comment>
<comment type="induction">
    <text evidence="2">Differentially expressed during meiosis.</text>
</comment>
<comment type="similarity">
    <text evidence="3">To yeast YDL157C.</text>
</comment>
<reference key="1">
    <citation type="journal article" date="2002" name="Nature">
        <title>The genome sequence of Schizosaccharomyces pombe.</title>
        <authorList>
            <person name="Wood V."/>
            <person name="Gwilliam R."/>
            <person name="Rajandream M.A."/>
            <person name="Lyne M.H."/>
            <person name="Lyne R."/>
            <person name="Stewart A."/>
            <person name="Sgouros J.G."/>
            <person name="Peat N."/>
            <person name="Hayles J."/>
            <person name="Baker S.G."/>
            <person name="Basham D."/>
            <person name="Bowman S."/>
            <person name="Brooks K."/>
            <person name="Brown D."/>
            <person name="Brown S."/>
            <person name="Chillingworth T."/>
            <person name="Churcher C.M."/>
            <person name="Collins M."/>
            <person name="Connor R."/>
            <person name="Cronin A."/>
            <person name="Davis P."/>
            <person name="Feltwell T."/>
            <person name="Fraser A."/>
            <person name="Gentles S."/>
            <person name="Goble A."/>
            <person name="Hamlin N."/>
            <person name="Harris D.E."/>
            <person name="Hidalgo J."/>
            <person name="Hodgson G."/>
            <person name="Holroyd S."/>
            <person name="Hornsby T."/>
            <person name="Howarth S."/>
            <person name="Huckle E.J."/>
            <person name="Hunt S."/>
            <person name="Jagels K."/>
            <person name="James K.D."/>
            <person name="Jones L."/>
            <person name="Jones M."/>
            <person name="Leather S."/>
            <person name="McDonald S."/>
            <person name="McLean J."/>
            <person name="Mooney P."/>
            <person name="Moule S."/>
            <person name="Mungall K.L."/>
            <person name="Murphy L.D."/>
            <person name="Niblett D."/>
            <person name="Odell C."/>
            <person name="Oliver K."/>
            <person name="O'Neil S."/>
            <person name="Pearson D."/>
            <person name="Quail M.A."/>
            <person name="Rabbinowitsch E."/>
            <person name="Rutherford K.M."/>
            <person name="Rutter S."/>
            <person name="Saunders D."/>
            <person name="Seeger K."/>
            <person name="Sharp S."/>
            <person name="Skelton J."/>
            <person name="Simmonds M.N."/>
            <person name="Squares R."/>
            <person name="Squares S."/>
            <person name="Stevens K."/>
            <person name="Taylor K."/>
            <person name="Taylor R.G."/>
            <person name="Tivey A."/>
            <person name="Walsh S.V."/>
            <person name="Warren T."/>
            <person name="Whitehead S."/>
            <person name="Woodward J.R."/>
            <person name="Volckaert G."/>
            <person name="Aert R."/>
            <person name="Robben J."/>
            <person name="Grymonprez B."/>
            <person name="Weltjens I."/>
            <person name="Vanstreels E."/>
            <person name="Rieger M."/>
            <person name="Schaefer M."/>
            <person name="Mueller-Auer S."/>
            <person name="Gabel C."/>
            <person name="Fuchs M."/>
            <person name="Duesterhoeft A."/>
            <person name="Fritzc C."/>
            <person name="Holzer E."/>
            <person name="Moestl D."/>
            <person name="Hilbert H."/>
            <person name="Borzym K."/>
            <person name="Langer I."/>
            <person name="Beck A."/>
            <person name="Lehrach H."/>
            <person name="Reinhardt R."/>
            <person name="Pohl T.M."/>
            <person name="Eger P."/>
            <person name="Zimmermann W."/>
            <person name="Wedler H."/>
            <person name="Wambutt R."/>
            <person name="Purnelle B."/>
            <person name="Goffeau A."/>
            <person name="Cadieu E."/>
            <person name="Dreano S."/>
            <person name="Gloux S."/>
            <person name="Lelaure V."/>
            <person name="Mottier S."/>
            <person name="Galibert F."/>
            <person name="Aves S.J."/>
            <person name="Xiang Z."/>
            <person name="Hunt C."/>
            <person name="Moore K."/>
            <person name="Hurst S.M."/>
            <person name="Lucas M."/>
            <person name="Rochet M."/>
            <person name="Gaillardin C."/>
            <person name="Tallada V.A."/>
            <person name="Garzon A."/>
            <person name="Thode G."/>
            <person name="Daga R.R."/>
            <person name="Cruzado L."/>
            <person name="Jimenez J."/>
            <person name="Sanchez M."/>
            <person name="del Rey F."/>
            <person name="Benito J."/>
            <person name="Dominguez A."/>
            <person name="Revuelta J.L."/>
            <person name="Moreno S."/>
            <person name="Armstrong J."/>
            <person name="Forsburg S.L."/>
            <person name="Cerutti L."/>
            <person name="Lowe T."/>
            <person name="McCombie W.R."/>
            <person name="Paulsen I."/>
            <person name="Potashkin J."/>
            <person name="Shpakovski G.V."/>
            <person name="Ussery D."/>
            <person name="Barrell B.G."/>
            <person name="Nurse P."/>
        </authorList>
    </citation>
    <scope>NUCLEOTIDE SEQUENCE [LARGE SCALE GENOMIC DNA]</scope>
    <source>
        <strain>972 / ATCC 24843</strain>
    </source>
</reference>
<reference key="2">
    <citation type="journal article" date="2011" name="Genetics">
        <title>Augmented annotation of the Schizosaccharomyces pombe genome reveals additional genes required for growth and viability.</title>
        <authorList>
            <person name="Bitton D.A."/>
            <person name="Wood V."/>
            <person name="Scutt P.J."/>
            <person name="Grallert A."/>
            <person name="Yates T."/>
            <person name="Smith D.L."/>
            <person name="Hagan I.M."/>
            <person name="Miller C.J."/>
        </authorList>
    </citation>
    <scope>IDENTIFICATION</scope>
    <scope>INDUCTION</scope>
</reference>
<protein>
    <recommendedName>
        <fullName>Uncharacterized protein tam6, mitochondrial</fullName>
    </recommendedName>
    <alternativeName>
        <fullName>Transcripts altered in meiosis protein 6</fullName>
    </alternativeName>
</protein>
<name>TAM6_SCHPO</name>
<accession>G2TRJ5</accession>
<dbReference type="EMBL" id="CU329670">
    <property type="protein sequence ID" value="CCD31338.1"/>
    <property type="molecule type" value="Genomic_DNA"/>
</dbReference>
<dbReference type="RefSeq" id="XP_004001793.1">
    <property type="nucleotide sequence ID" value="XM_004001744.1"/>
</dbReference>
<dbReference type="STRING" id="284812.G2TRJ5"/>
<dbReference type="PaxDb" id="4896-SPAC1F7.14c.1"/>
<dbReference type="EnsemblFungi" id="SPAC1F7.14c.1">
    <property type="protein sequence ID" value="SPAC1F7.14c.1:pep"/>
    <property type="gene ID" value="SPAC1F7.14c"/>
</dbReference>
<dbReference type="PomBase" id="SPAC1F7.14c">
    <property type="gene designation" value="tam6"/>
</dbReference>
<dbReference type="VEuPathDB" id="FungiDB:SPAC1F7.14c"/>
<dbReference type="eggNOG" id="ENOG502SD10">
    <property type="taxonomic scope" value="Eukaryota"/>
</dbReference>
<dbReference type="HOGENOM" id="CLU_159478_1_0_1"/>
<dbReference type="InParanoid" id="G2TRJ5"/>
<dbReference type="OMA" id="EQYDCLP"/>
<dbReference type="PRO" id="PR:G2TRJ5"/>
<dbReference type="Proteomes" id="UP000002485">
    <property type="component" value="Chromosome I"/>
</dbReference>
<dbReference type="GO" id="GO:0005739">
    <property type="term" value="C:mitochondrion"/>
    <property type="evidence" value="ECO:0000266"/>
    <property type="project" value="PomBase"/>
</dbReference>
<dbReference type="InterPro" id="IPR028036">
    <property type="entry name" value="DMAC1-like_dom"/>
</dbReference>
<dbReference type="InterPro" id="IPR053092">
    <property type="entry name" value="Mitochondrial_unc_protein"/>
</dbReference>
<dbReference type="PANTHER" id="PTHR28048">
    <property type="entry name" value="ACR195WP"/>
    <property type="match status" value="1"/>
</dbReference>
<dbReference type="PANTHER" id="PTHR28048:SF1">
    <property type="entry name" value="ACR195WP"/>
    <property type="match status" value="1"/>
</dbReference>
<dbReference type="Pfam" id="PF15055">
    <property type="entry name" value="DUF4536"/>
    <property type="match status" value="1"/>
</dbReference>
<feature type="chain" id="PRO_0000416515" description="Uncharacterized protein tam6, mitochondrial">
    <location>
        <begin position="1"/>
        <end position="81"/>
    </location>
</feature>
<sequence length="81" mass="9133">MMPSSSFQQTPKPVDLDDPRFEQYDCLPCRLVGAGAFTGLGIYAYSQSRIPLNTPNYKLKRFGILGMAYGFILTGVYRLFQ</sequence>
<organism>
    <name type="scientific">Schizosaccharomyces pombe (strain 972 / ATCC 24843)</name>
    <name type="common">Fission yeast</name>
    <dbReference type="NCBI Taxonomy" id="284812"/>
    <lineage>
        <taxon>Eukaryota</taxon>
        <taxon>Fungi</taxon>
        <taxon>Dikarya</taxon>
        <taxon>Ascomycota</taxon>
        <taxon>Taphrinomycotina</taxon>
        <taxon>Schizosaccharomycetes</taxon>
        <taxon>Schizosaccharomycetales</taxon>
        <taxon>Schizosaccharomycetaceae</taxon>
        <taxon>Schizosaccharomyces</taxon>
    </lineage>
</organism>
<evidence type="ECO:0000250" key="1"/>
<evidence type="ECO:0000269" key="2">
    <source>
    </source>
</evidence>
<evidence type="ECO:0000305" key="3"/>
<keyword id="KW-0496">Mitochondrion</keyword>
<keyword id="KW-1185">Reference proteome</keyword>
<proteinExistence type="evidence at transcript level"/>
<gene>
    <name type="primary">tam6</name>
    <name type="ORF">SPAC1F7.14c</name>
</gene>